<evidence type="ECO:0000255" key="1">
    <source>
        <dbReference type="HAMAP-Rule" id="MF_00116"/>
    </source>
</evidence>
<feature type="chain" id="PRO_1000015448" description="Deoxyuridine 5'-triphosphate nucleotidohydrolase">
    <location>
        <begin position="1"/>
        <end position="152"/>
    </location>
</feature>
<feature type="binding site" evidence="1">
    <location>
        <begin position="72"/>
        <end position="74"/>
    </location>
    <ligand>
        <name>substrate</name>
    </ligand>
</feature>
<feature type="binding site" evidence="1">
    <location>
        <position position="85"/>
    </location>
    <ligand>
        <name>substrate</name>
    </ligand>
</feature>
<feature type="binding site" evidence="1">
    <location>
        <begin position="89"/>
        <end position="91"/>
    </location>
    <ligand>
        <name>substrate</name>
    </ligand>
</feature>
<comment type="function">
    <text evidence="1">This enzyme is involved in nucleotide metabolism: it produces dUMP, the immediate precursor of thymidine nucleotides and it decreases the intracellular concentration of dUTP so that uracil cannot be incorporated into DNA.</text>
</comment>
<comment type="catalytic activity">
    <reaction evidence="1">
        <text>dUTP + H2O = dUMP + diphosphate + H(+)</text>
        <dbReference type="Rhea" id="RHEA:10248"/>
        <dbReference type="ChEBI" id="CHEBI:15377"/>
        <dbReference type="ChEBI" id="CHEBI:15378"/>
        <dbReference type="ChEBI" id="CHEBI:33019"/>
        <dbReference type="ChEBI" id="CHEBI:61555"/>
        <dbReference type="ChEBI" id="CHEBI:246422"/>
        <dbReference type="EC" id="3.6.1.23"/>
    </reaction>
</comment>
<comment type="cofactor">
    <cofactor evidence="1">
        <name>Mg(2+)</name>
        <dbReference type="ChEBI" id="CHEBI:18420"/>
    </cofactor>
</comment>
<comment type="pathway">
    <text evidence="1">Pyrimidine metabolism; dUMP biosynthesis; dUMP from dCTP (dUTP route): step 2/2.</text>
</comment>
<comment type="similarity">
    <text evidence="1">Belongs to the dUTPase family.</text>
</comment>
<keyword id="KW-0378">Hydrolase</keyword>
<keyword id="KW-0460">Magnesium</keyword>
<keyword id="KW-0479">Metal-binding</keyword>
<keyword id="KW-0546">Nucleotide metabolism</keyword>
<keyword id="KW-1185">Reference proteome</keyword>
<gene>
    <name evidence="1" type="primary">dut</name>
    <name type="ordered locus">BRADO0078</name>
</gene>
<sequence length="152" mass="15640">MTQTIAIDVRILPHGAGLPLPAYQTAHAAGMDLLAAVAPDAPVVLAPGSHAMVPTGLSIALPDGFEAQVRPRSGLAARHGVTVLNSPGTIDADYRGEVCVLLINHGKEPFTIQRGERIAQMVIASVVRAELAITTTLSETARGSGGFGSTGR</sequence>
<accession>A4YJH3</accession>
<name>DUT_BRASO</name>
<organism>
    <name type="scientific">Bradyrhizobium sp. (strain ORS 278)</name>
    <dbReference type="NCBI Taxonomy" id="114615"/>
    <lineage>
        <taxon>Bacteria</taxon>
        <taxon>Pseudomonadati</taxon>
        <taxon>Pseudomonadota</taxon>
        <taxon>Alphaproteobacteria</taxon>
        <taxon>Hyphomicrobiales</taxon>
        <taxon>Nitrobacteraceae</taxon>
        <taxon>Bradyrhizobium</taxon>
    </lineage>
</organism>
<protein>
    <recommendedName>
        <fullName evidence="1">Deoxyuridine 5'-triphosphate nucleotidohydrolase</fullName>
        <shortName evidence="1">dUTPase</shortName>
        <ecNumber evidence="1">3.6.1.23</ecNumber>
    </recommendedName>
    <alternativeName>
        <fullName evidence="1">dUTP pyrophosphatase</fullName>
    </alternativeName>
</protein>
<dbReference type="EC" id="3.6.1.23" evidence="1"/>
<dbReference type="EMBL" id="CU234118">
    <property type="protein sequence ID" value="CAL74049.1"/>
    <property type="molecule type" value="Genomic_DNA"/>
</dbReference>
<dbReference type="RefSeq" id="WP_011923350.1">
    <property type="nucleotide sequence ID" value="NC_009445.1"/>
</dbReference>
<dbReference type="SMR" id="A4YJH3"/>
<dbReference type="STRING" id="114615.BRADO0078"/>
<dbReference type="KEGG" id="bra:BRADO0078"/>
<dbReference type="eggNOG" id="COG0756">
    <property type="taxonomic scope" value="Bacteria"/>
</dbReference>
<dbReference type="HOGENOM" id="CLU_068508_1_2_5"/>
<dbReference type="OrthoDB" id="9809956at2"/>
<dbReference type="UniPathway" id="UPA00610">
    <property type="reaction ID" value="UER00666"/>
</dbReference>
<dbReference type="Proteomes" id="UP000001994">
    <property type="component" value="Chromosome"/>
</dbReference>
<dbReference type="GO" id="GO:0004170">
    <property type="term" value="F:dUTP diphosphatase activity"/>
    <property type="evidence" value="ECO:0007669"/>
    <property type="project" value="UniProtKB-UniRule"/>
</dbReference>
<dbReference type="GO" id="GO:0000287">
    <property type="term" value="F:magnesium ion binding"/>
    <property type="evidence" value="ECO:0007669"/>
    <property type="project" value="UniProtKB-UniRule"/>
</dbReference>
<dbReference type="GO" id="GO:0006226">
    <property type="term" value="P:dUMP biosynthetic process"/>
    <property type="evidence" value="ECO:0007669"/>
    <property type="project" value="UniProtKB-UniRule"/>
</dbReference>
<dbReference type="GO" id="GO:0046081">
    <property type="term" value="P:dUTP catabolic process"/>
    <property type="evidence" value="ECO:0007669"/>
    <property type="project" value="InterPro"/>
</dbReference>
<dbReference type="CDD" id="cd07557">
    <property type="entry name" value="trimeric_dUTPase"/>
    <property type="match status" value="1"/>
</dbReference>
<dbReference type="FunFam" id="2.70.40.10:FF:000002">
    <property type="entry name" value="dUTP diphosphatase"/>
    <property type="match status" value="1"/>
</dbReference>
<dbReference type="Gene3D" id="2.70.40.10">
    <property type="match status" value="1"/>
</dbReference>
<dbReference type="HAMAP" id="MF_00116">
    <property type="entry name" value="dUTPase_bact"/>
    <property type="match status" value="1"/>
</dbReference>
<dbReference type="InterPro" id="IPR008181">
    <property type="entry name" value="dUTPase"/>
</dbReference>
<dbReference type="InterPro" id="IPR029054">
    <property type="entry name" value="dUTPase-like"/>
</dbReference>
<dbReference type="InterPro" id="IPR036157">
    <property type="entry name" value="dUTPase-like_sf"/>
</dbReference>
<dbReference type="InterPro" id="IPR033704">
    <property type="entry name" value="dUTPase_trimeric"/>
</dbReference>
<dbReference type="NCBIfam" id="TIGR00576">
    <property type="entry name" value="dut"/>
    <property type="match status" value="1"/>
</dbReference>
<dbReference type="NCBIfam" id="NF001862">
    <property type="entry name" value="PRK00601.1"/>
    <property type="match status" value="1"/>
</dbReference>
<dbReference type="PANTHER" id="PTHR11241">
    <property type="entry name" value="DEOXYURIDINE 5'-TRIPHOSPHATE NUCLEOTIDOHYDROLASE"/>
    <property type="match status" value="1"/>
</dbReference>
<dbReference type="PANTHER" id="PTHR11241:SF0">
    <property type="entry name" value="DEOXYURIDINE 5'-TRIPHOSPHATE NUCLEOTIDOHYDROLASE"/>
    <property type="match status" value="1"/>
</dbReference>
<dbReference type="Pfam" id="PF00692">
    <property type="entry name" value="dUTPase"/>
    <property type="match status" value="1"/>
</dbReference>
<dbReference type="SUPFAM" id="SSF51283">
    <property type="entry name" value="dUTPase-like"/>
    <property type="match status" value="1"/>
</dbReference>
<reference key="1">
    <citation type="journal article" date="2007" name="Science">
        <title>Legumes symbioses: absence of nod genes in photosynthetic bradyrhizobia.</title>
        <authorList>
            <person name="Giraud E."/>
            <person name="Moulin L."/>
            <person name="Vallenet D."/>
            <person name="Barbe V."/>
            <person name="Cytryn E."/>
            <person name="Avarre J.-C."/>
            <person name="Jaubert M."/>
            <person name="Simon D."/>
            <person name="Cartieaux F."/>
            <person name="Prin Y."/>
            <person name="Bena G."/>
            <person name="Hannibal L."/>
            <person name="Fardoux J."/>
            <person name="Kojadinovic M."/>
            <person name="Vuillet L."/>
            <person name="Lajus A."/>
            <person name="Cruveiller S."/>
            <person name="Rouy Z."/>
            <person name="Mangenot S."/>
            <person name="Segurens B."/>
            <person name="Dossat C."/>
            <person name="Franck W.L."/>
            <person name="Chang W.-S."/>
            <person name="Saunders E."/>
            <person name="Bruce D."/>
            <person name="Richardson P."/>
            <person name="Normand P."/>
            <person name="Dreyfus B."/>
            <person name="Pignol D."/>
            <person name="Stacey G."/>
            <person name="Emerich D."/>
            <person name="Vermeglio A."/>
            <person name="Medigue C."/>
            <person name="Sadowsky M."/>
        </authorList>
    </citation>
    <scope>NUCLEOTIDE SEQUENCE [LARGE SCALE GENOMIC DNA]</scope>
    <source>
        <strain>ORS 278</strain>
    </source>
</reference>
<proteinExistence type="inferred from homology"/>